<feature type="chain" id="PRO_0000384006" description="Lactate utilization protein C">
    <location>
        <begin position="1"/>
        <end position="240"/>
    </location>
</feature>
<accession>A8FDN6</accession>
<sequence>MKGTISHRESFLTHIRQQLGKDSSSSASIQRPAWKHQVQWETNGLLSKEELVEQLKMQCQRIHTRVVETTPEEAPSALRSLMTEYGEGSVMTSGDHRFEQYGFYPMFDSLQHEGFAVTSWNAEASREENIRLAEQAAYSVVFSDYTLAESGTIVLSSHQGQGRALHFLPMMYIVCIEKSTVVPRMIQAVSTLNRLVEEGEQAKGAIHFISGPSNSADIEMNLVVGVHGPVRAVYLLIDDE</sequence>
<proteinExistence type="inferred from homology"/>
<dbReference type="EMBL" id="CP000813">
    <property type="protein sequence ID" value="ABV62353.1"/>
    <property type="molecule type" value="Genomic_DNA"/>
</dbReference>
<dbReference type="RefSeq" id="WP_012010085.1">
    <property type="nucleotide sequence ID" value="NC_009848.4"/>
</dbReference>
<dbReference type="SMR" id="A8FDN6"/>
<dbReference type="STRING" id="315750.BPUM_1674"/>
<dbReference type="GeneID" id="5620935"/>
<dbReference type="KEGG" id="bpu:BPUM_1674"/>
<dbReference type="eggNOG" id="COG1556">
    <property type="taxonomic scope" value="Bacteria"/>
</dbReference>
<dbReference type="HOGENOM" id="CLU_090664_1_0_9"/>
<dbReference type="OrthoDB" id="9794157at2"/>
<dbReference type="Proteomes" id="UP000001355">
    <property type="component" value="Chromosome"/>
</dbReference>
<dbReference type="GO" id="GO:0006089">
    <property type="term" value="P:lactate metabolic process"/>
    <property type="evidence" value="ECO:0007669"/>
    <property type="project" value="UniProtKB-UniRule"/>
</dbReference>
<dbReference type="Gene3D" id="3.40.50.10420">
    <property type="entry name" value="NagB/RpiA/CoA transferase-like"/>
    <property type="match status" value="1"/>
</dbReference>
<dbReference type="HAMAP" id="MF_02104">
    <property type="entry name" value="LutC"/>
    <property type="match status" value="1"/>
</dbReference>
<dbReference type="InterPro" id="IPR024185">
    <property type="entry name" value="FTHF_cligase-like_sf"/>
</dbReference>
<dbReference type="InterPro" id="IPR003741">
    <property type="entry name" value="LUD_dom"/>
</dbReference>
<dbReference type="InterPro" id="IPR022823">
    <property type="entry name" value="LutC"/>
</dbReference>
<dbReference type="InterPro" id="IPR037171">
    <property type="entry name" value="NagB/RpiA_transferase-like"/>
</dbReference>
<dbReference type="PANTHER" id="PTHR43682">
    <property type="entry name" value="LACTATE UTILIZATION PROTEIN C"/>
    <property type="match status" value="1"/>
</dbReference>
<dbReference type="PANTHER" id="PTHR43682:SF1">
    <property type="entry name" value="LACTATE UTILIZATION PROTEIN C"/>
    <property type="match status" value="1"/>
</dbReference>
<dbReference type="Pfam" id="PF02589">
    <property type="entry name" value="LUD_dom"/>
    <property type="match status" value="1"/>
</dbReference>
<dbReference type="SUPFAM" id="SSF100950">
    <property type="entry name" value="NagB/RpiA/CoA transferase-like"/>
    <property type="match status" value="1"/>
</dbReference>
<evidence type="ECO:0000255" key="1">
    <source>
        <dbReference type="HAMAP-Rule" id="MF_02104"/>
    </source>
</evidence>
<reference key="1">
    <citation type="journal article" date="2007" name="PLoS ONE">
        <title>Paradoxical DNA repair and peroxide resistance gene conservation in Bacillus pumilus SAFR-032.</title>
        <authorList>
            <person name="Gioia J."/>
            <person name="Yerrapragada S."/>
            <person name="Qin X."/>
            <person name="Jiang H."/>
            <person name="Igboeli O.C."/>
            <person name="Muzny D."/>
            <person name="Dugan-Rocha S."/>
            <person name="Ding Y."/>
            <person name="Hawes A."/>
            <person name="Liu W."/>
            <person name="Perez L."/>
            <person name="Kovar C."/>
            <person name="Dinh H."/>
            <person name="Lee S."/>
            <person name="Nazareth L."/>
            <person name="Blyth P."/>
            <person name="Holder M."/>
            <person name="Buhay C."/>
            <person name="Tirumalai M.R."/>
            <person name="Liu Y."/>
            <person name="Dasgupta I."/>
            <person name="Bokhetache L."/>
            <person name="Fujita M."/>
            <person name="Karouia F."/>
            <person name="Eswara Moorthy P."/>
            <person name="Siefert J."/>
            <person name="Uzman A."/>
            <person name="Buzumbo P."/>
            <person name="Verma A."/>
            <person name="Zwiya H."/>
            <person name="McWilliams B.D."/>
            <person name="Olowu A."/>
            <person name="Clinkenbeard K.D."/>
            <person name="Newcombe D."/>
            <person name="Golebiewski L."/>
            <person name="Petrosino J.F."/>
            <person name="Nicholson W.L."/>
            <person name="Fox G.E."/>
            <person name="Venkateswaran K."/>
            <person name="Highlander S.K."/>
            <person name="Weinstock G.M."/>
        </authorList>
    </citation>
    <scope>NUCLEOTIDE SEQUENCE [LARGE SCALE GENOMIC DNA]</scope>
    <source>
        <strain>SAFR-032</strain>
    </source>
</reference>
<organism>
    <name type="scientific">Bacillus pumilus (strain SAFR-032)</name>
    <dbReference type="NCBI Taxonomy" id="315750"/>
    <lineage>
        <taxon>Bacteria</taxon>
        <taxon>Bacillati</taxon>
        <taxon>Bacillota</taxon>
        <taxon>Bacilli</taxon>
        <taxon>Bacillales</taxon>
        <taxon>Bacillaceae</taxon>
        <taxon>Bacillus</taxon>
    </lineage>
</organism>
<gene>
    <name evidence="1" type="primary">lutC</name>
    <name type="ordered locus">BPUM_1674</name>
</gene>
<comment type="function">
    <text evidence="1">Is involved in L-lactate degradation and allows cells to grow with lactate as the sole carbon source.</text>
</comment>
<comment type="similarity">
    <text evidence="1">Belongs to the LutC/YkgG family.</text>
</comment>
<name>LUTC_BACP2</name>
<protein>
    <recommendedName>
        <fullName evidence="1">Lactate utilization protein C</fullName>
    </recommendedName>
</protein>